<dbReference type="EC" id="1.2.1.41" evidence="1"/>
<dbReference type="EMBL" id="DQ489736">
    <property type="protein sequence ID" value="ACA82120.1"/>
    <property type="molecule type" value="Genomic_DNA"/>
</dbReference>
<dbReference type="RefSeq" id="WP_004907475.1">
    <property type="nucleotide sequence ID" value="NC_010471.1"/>
</dbReference>
<dbReference type="SMR" id="B1MX68"/>
<dbReference type="STRING" id="349519.LCK_00287"/>
<dbReference type="KEGG" id="lci:LCK_00287"/>
<dbReference type="eggNOG" id="COG0014">
    <property type="taxonomic scope" value="Bacteria"/>
</dbReference>
<dbReference type="HOGENOM" id="CLU_030231_0_0_9"/>
<dbReference type="OrthoDB" id="9809970at2"/>
<dbReference type="UniPathway" id="UPA00098">
    <property type="reaction ID" value="UER00360"/>
</dbReference>
<dbReference type="Proteomes" id="UP000002166">
    <property type="component" value="Chromosome"/>
</dbReference>
<dbReference type="GO" id="GO:0005737">
    <property type="term" value="C:cytoplasm"/>
    <property type="evidence" value="ECO:0007669"/>
    <property type="project" value="UniProtKB-SubCell"/>
</dbReference>
<dbReference type="GO" id="GO:0004350">
    <property type="term" value="F:glutamate-5-semialdehyde dehydrogenase activity"/>
    <property type="evidence" value="ECO:0007669"/>
    <property type="project" value="UniProtKB-UniRule"/>
</dbReference>
<dbReference type="GO" id="GO:0050661">
    <property type="term" value="F:NADP binding"/>
    <property type="evidence" value="ECO:0007669"/>
    <property type="project" value="InterPro"/>
</dbReference>
<dbReference type="GO" id="GO:0055129">
    <property type="term" value="P:L-proline biosynthetic process"/>
    <property type="evidence" value="ECO:0007669"/>
    <property type="project" value="UniProtKB-UniRule"/>
</dbReference>
<dbReference type="CDD" id="cd07079">
    <property type="entry name" value="ALDH_F18-19_ProA-GPR"/>
    <property type="match status" value="1"/>
</dbReference>
<dbReference type="FunFam" id="3.40.309.10:FF:000006">
    <property type="entry name" value="Gamma-glutamyl phosphate reductase"/>
    <property type="match status" value="1"/>
</dbReference>
<dbReference type="Gene3D" id="3.40.605.10">
    <property type="entry name" value="Aldehyde Dehydrogenase, Chain A, domain 1"/>
    <property type="match status" value="1"/>
</dbReference>
<dbReference type="Gene3D" id="3.40.309.10">
    <property type="entry name" value="Aldehyde Dehydrogenase, Chain A, domain 2"/>
    <property type="match status" value="1"/>
</dbReference>
<dbReference type="HAMAP" id="MF_00412">
    <property type="entry name" value="ProA"/>
    <property type="match status" value="1"/>
</dbReference>
<dbReference type="InterPro" id="IPR016161">
    <property type="entry name" value="Ald_DH/histidinol_DH"/>
</dbReference>
<dbReference type="InterPro" id="IPR016163">
    <property type="entry name" value="Ald_DH_C"/>
</dbReference>
<dbReference type="InterPro" id="IPR016162">
    <property type="entry name" value="Ald_DH_N"/>
</dbReference>
<dbReference type="InterPro" id="IPR015590">
    <property type="entry name" value="Aldehyde_DH_dom"/>
</dbReference>
<dbReference type="InterPro" id="IPR020593">
    <property type="entry name" value="G-glutamylP_reductase_CS"/>
</dbReference>
<dbReference type="InterPro" id="IPR012134">
    <property type="entry name" value="Glu-5-SA_DH"/>
</dbReference>
<dbReference type="InterPro" id="IPR000965">
    <property type="entry name" value="GPR_dom"/>
</dbReference>
<dbReference type="NCBIfam" id="NF001221">
    <property type="entry name" value="PRK00197.1"/>
    <property type="match status" value="1"/>
</dbReference>
<dbReference type="NCBIfam" id="TIGR00407">
    <property type="entry name" value="proA"/>
    <property type="match status" value="1"/>
</dbReference>
<dbReference type="PANTHER" id="PTHR11063:SF8">
    <property type="entry name" value="DELTA-1-PYRROLINE-5-CARBOXYLATE SYNTHASE"/>
    <property type="match status" value="1"/>
</dbReference>
<dbReference type="PANTHER" id="PTHR11063">
    <property type="entry name" value="GLUTAMATE SEMIALDEHYDE DEHYDROGENASE"/>
    <property type="match status" value="1"/>
</dbReference>
<dbReference type="Pfam" id="PF00171">
    <property type="entry name" value="Aldedh"/>
    <property type="match status" value="1"/>
</dbReference>
<dbReference type="PIRSF" id="PIRSF000151">
    <property type="entry name" value="GPR"/>
    <property type="match status" value="1"/>
</dbReference>
<dbReference type="SUPFAM" id="SSF53720">
    <property type="entry name" value="ALDH-like"/>
    <property type="match status" value="1"/>
</dbReference>
<dbReference type="PROSITE" id="PS01223">
    <property type="entry name" value="PROA"/>
    <property type="match status" value="1"/>
</dbReference>
<evidence type="ECO:0000255" key="1">
    <source>
        <dbReference type="HAMAP-Rule" id="MF_00412"/>
    </source>
</evidence>
<feature type="chain" id="PRO_0000340890" description="Gamma-glutamyl phosphate reductase">
    <location>
        <begin position="1"/>
        <end position="415"/>
    </location>
</feature>
<comment type="function">
    <text evidence="1">Catalyzes the NADPH-dependent reduction of L-glutamate 5-phosphate into L-glutamate 5-semialdehyde and phosphate. The product spontaneously undergoes cyclization to form 1-pyrroline-5-carboxylate.</text>
</comment>
<comment type="catalytic activity">
    <reaction evidence="1">
        <text>L-glutamate 5-semialdehyde + phosphate + NADP(+) = L-glutamyl 5-phosphate + NADPH + H(+)</text>
        <dbReference type="Rhea" id="RHEA:19541"/>
        <dbReference type="ChEBI" id="CHEBI:15378"/>
        <dbReference type="ChEBI" id="CHEBI:43474"/>
        <dbReference type="ChEBI" id="CHEBI:57783"/>
        <dbReference type="ChEBI" id="CHEBI:58066"/>
        <dbReference type="ChEBI" id="CHEBI:58274"/>
        <dbReference type="ChEBI" id="CHEBI:58349"/>
        <dbReference type="EC" id="1.2.1.41"/>
    </reaction>
</comment>
<comment type="pathway">
    <text evidence="1">Amino-acid biosynthesis; L-proline biosynthesis; L-glutamate 5-semialdehyde from L-glutamate: step 2/2.</text>
</comment>
<comment type="subcellular location">
    <subcellularLocation>
        <location evidence="1">Cytoplasm</location>
    </subcellularLocation>
</comment>
<comment type="similarity">
    <text evidence="1">Belongs to the gamma-glutamyl phosphate reductase family.</text>
</comment>
<keyword id="KW-0028">Amino-acid biosynthesis</keyword>
<keyword id="KW-0963">Cytoplasm</keyword>
<keyword id="KW-0521">NADP</keyword>
<keyword id="KW-0560">Oxidoreductase</keyword>
<keyword id="KW-0641">Proline biosynthesis</keyword>
<keyword id="KW-1185">Reference proteome</keyword>
<protein>
    <recommendedName>
        <fullName evidence="1">Gamma-glutamyl phosphate reductase</fullName>
        <shortName evidence="1">GPR</shortName>
        <ecNumber evidence="1">1.2.1.41</ecNumber>
    </recommendedName>
    <alternativeName>
        <fullName evidence="1">Glutamate-5-semialdehyde dehydrogenase</fullName>
    </alternativeName>
    <alternativeName>
        <fullName evidence="1">Glutamyl-gamma-semialdehyde dehydrogenase</fullName>
        <shortName evidence="1">GSA dehydrogenase</shortName>
    </alternativeName>
</protein>
<organism>
    <name type="scientific">Leuconostoc citreum (strain KM20)</name>
    <dbReference type="NCBI Taxonomy" id="349519"/>
    <lineage>
        <taxon>Bacteria</taxon>
        <taxon>Bacillati</taxon>
        <taxon>Bacillota</taxon>
        <taxon>Bacilli</taxon>
        <taxon>Lactobacillales</taxon>
        <taxon>Lactobacillaceae</taxon>
        <taxon>Leuconostoc</taxon>
    </lineage>
</organism>
<proteinExistence type="inferred from homology"/>
<accession>B1MX68</accession>
<name>PROA_LEUCK</name>
<sequence>MVVSVQEIGQRAKTAATDVAGLTITTRNDLLRQMSQALLDNQSAIMAANKEDIAAYANTLSQPMIKRLTLDQPTIKAIATSLLAVVALPDPLAGPFDTWQTHVDLKIVKRVVPLGVVAMIYEARPNVTIDAAALTLKSGNAVILRGGKEAIHSNTVLANILRDVLRDNALNPDIIQLITDTSHESVNVLLNMRDYVDVLIPRGSAKFIDFVVANATVPVIETGAGNTHIFVDQSADQKQAIAIIHNAKTQKPAVCNAAEKLLVHVAIAAEFIPKITEKLVRAHVELRGDQASHQLDPRISLASEQDWDTEYNDLIMGIKIVSGTNDAIDWINNHTTHHSETIISKSSENVAQFMNQVDAAVVYQNASSRFTDGFEFGFGAEIGISTQKLHARGPMGLPALTTIKYEVFGQGQIRE</sequence>
<gene>
    <name evidence="1" type="primary">proA</name>
    <name type="ordered locus">LCK_00287</name>
</gene>
<reference key="1">
    <citation type="journal article" date="2008" name="J. Bacteriol.">
        <title>Complete genome sequence of Leuconostoc citreum KM20.</title>
        <authorList>
            <person name="Kim J.F."/>
            <person name="Jeong H."/>
            <person name="Lee J.-S."/>
            <person name="Choi S.-H."/>
            <person name="Ha M."/>
            <person name="Hur C.-G."/>
            <person name="Kim J.-S."/>
            <person name="Lee S."/>
            <person name="Park H.-S."/>
            <person name="Park Y.-H."/>
            <person name="Oh T.K."/>
        </authorList>
    </citation>
    <scope>NUCLEOTIDE SEQUENCE [LARGE SCALE GENOMIC DNA]</scope>
    <source>
        <strain>KM20</strain>
    </source>
</reference>